<sequence length="206" mass="22097">MTDPDLHQNDPENPAQASEPVVSKPYIMPDDPETGSAEAYAKEAAEARDKMLRTLAEMENLRKRTAREVADARMYGITGFARDVLDIADNLQRALDAVPAETRANADAGLKSLIEGVELTERSLLNTLEKNGVKKFDPTGQKFDPNFQQAMYEVPDPSVPSGTVVQVVQAGFMIGERVLRPALVGVSKGGAKAAPAASNDQSNSAA</sequence>
<organism>
    <name type="scientific">Bradyrhizobium sp. (strain ORS 278)</name>
    <dbReference type="NCBI Taxonomy" id="114615"/>
    <lineage>
        <taxon>Bacteria</taxon>
        <taxon>Pseudomonadati</taxon>
        <taxon>Pseudomonadota</taxon>
        <taxon>Alphaproteobacteria</taxon>
        <taxon>Hyphomicrobiales</taxon>
        <taxon>Nitrobacteraceae</taxon>
        <taxon>Bradyrhizobium</taxon>
    </lineage>
</organism>
<proteinExistence type="inferred from homology"/>
<reference key="1">
    <citation type="journal article" date="2007" name="Science">
        <title>Legumes symbioses: absence of nod genes in photosynthetic bradyrhizobia.</title>
        <authorList>
            <person name="Giraud E."/>
            <person name="Moulin L."/>
            <person name="Vallenet D."/>
            <person name="Barbe V."/>
            <person name="Cytryn E."/>
            <person name="Avarre J.-C."/>
            <person name="Jaubert M."/>
            <person name="Simon D."/>
            <person name="Cartieaux F."/>
            <person name="Prin Y."/>
            <person name="Bena G."/>
            <person name="Hannibal L."/>
            <person name="Fardoux J."/>
            <person name="Kojadinovic M."/>
            <person name="Vuillet L."/>
            <person name="Lajus A."/>
            <person name="Cruveiller S."/>
            <person name="Rouy Z."/>
            <person name="Mangenot S."/>
            <person name="Segurens B."/>
            <person name="Dossat C."/>
            <person name="Franck W.L."/>
            <person name="Chang W.-S."/>
            <person name="Saunders E."/>
            <person name="Bruce D."/>
            <person name="Richardson P."/>
            <person name="Normand P."/>
            <person name="Dreyfus B."/>
            <person name="Pignol D."/>
            <person name="Stacey G."/>
            <person name="Emerich D."/>
            <person name="Vermeglio A."/>
            <person name="Medigue C."/>
            <person name="Sadowsky M."/>
        </authorList>
    </citation>
    <scope>NUCLEOTIDE SEQUENCE [LARGE SCALE GENOMIC DNA]</scope>
    <source>
        <strain>ORS 278</strain>
    </source>
</reference>
<keyword id="KW-0143">Chaperone</keyword>
<keyword id="KW-0963">Cytoplasm</keyword>
<keyword id="KW-1185">Reference proteome</keyword>
<keyword id="KW-0346">Stress response</keyword>
<comment type="function">
    <text evidence="1">Participates actively in the response to hyperosmotic and heat shock by preventing the aggregation of stress-denatured proteins, in association with DnaK and GrpE. It is the nucleotide exchange factor for DnaK and may function as a thermosensor. Unfolded proteins bind initially to DnaJ; upon interaction with the DnaJ-bound protein, DnaK hydrolyzes its bound ATP, resulting in the formation of a stable complex. GrpE releases ADP from DnaK; ATP binding to DnaK triggers the release of the substrate protein, thus completing the reaction cycle. Several rounds of ATP-dependent interactions between DnaJ, DnaK and GrpE are required for fully efficient folding.</text>
</comment>
<comment type="subunit">
    <text evidence="1">Homodimer.</text>
</comment>
<comment type="subcellular location">
    <subcellularLocation>
        <location evidence="1">Cytoplasm</location>
    </subcellularLocation>
</comment>
<comment type="similarity">
    <text evidence="1">Belongs to the GrpE family.</text>
</comment>
<protein>
    <recommendedName>
        <fullName evidence="1">Protein GrpE</fullName>
    </recommendedName>
    <alternativeName>
        <fullName evidence="1">HSP-70 cofactor</fullName>
    </alternativeName>
</protein>
<name>GRPE_BRASO</name>
<dbReference type="EMBL" id="CU234118">
    <property type="protein sequence ID" value="CAL74137.1"/>
    <property type="molecule type" value="Genomic_DNA"/>
</dbReference>
<dbReference type="RefSeq" id="WP_011923429.1">
    <property type="nucleotide sequence ID" value="NC_009445.1"/>
</dbReference>
<dbReference type="SMR" id="A4YJR1"/>
<dbReference type="STRING" id="114615.BRADO0171"/>
<dbReference type="KEGG" id="bra:BRADO0171"/>
<dbReference type="eggNOG" id="COG0576">
    <property type="taxonomic scope" value="Bacteria"/>
</dbReference>
<dbReference type="HOGENOM" id="CLU_057217_6_2_5"/>
<dbReference type="OrthoDB" id="9789811at2"/>
<dbReference type="Proteomes" id="UP000001994">
    <property type="component" value="Chromosome"/>
</dbReference>
<dbReference type="GO" id="GO:0005737">
    <property type="term" value="C:cytoplasm"/>
    <property type="evidence" value="ECO:0007669"/>
    <property type="project" value="UniProtKB-SubCell"/>
</dbReference>
<dbReference type="GO" id="GO:0000774">
    <property type="term" value="F:adenyl-nucleotide exchange factor activity"/>
    <property type="evidence" value="ECO:0007669"/>
    <property type="project" value="InterPro"/>
</dbReference>
<dbReference type="GO" id="GO:0042803">
    <property type="term" value="F:protein homodimerization activity"/>
    <property type="evidence" value="ECO:0007669"/>
    <property type="project" value="InterPro"/>
</dbReference>
<dbReference type="GO" id="GO:0051087">
    <property type="term" value="F:protein-folding chaperone binding"/>
    <property type="evidence" value="ECO:0007669"/>
    <property type="project" value="InterPro"/>
</dbReference>
<dbReference type="GO" id="GO:0051082">
    <property type="term" value="F:unfolded protein binding"/>
    <property type="evidence" value="ECO:0007669"/>
    <property type="project" value="TreeGrafter"/>
</dbReference>
<dbReference type="GO" id="GO:0006457">
    <property type="term" value="P:protein folding"/>
    <property type="evidence" value="ECO:0007669"/>
    <property type="project" value="InterPro"/>
</dbReference>
<dbReference type="CDD" id="cd00446">
    <property type="entry name" value="GrpE"/>
    <property type="match status" value="1"/>
</dbReference>
<dbReference type="FunFam" id="2.30.22.10:FF:000002">
    <property type="entry name" value="GrpE protein homolog"/>
    <property type="match status" value="1"/>
</dbReference>
<dbReference type="Gene3D" id="3.90.20.20">
    <property type="match status" value="1"/>
</dbReference>
<dbReference type="Gene3D" id="2.30.22.10">
    <property type="entry name" value="Head domain of nucleotide exchange factor GrpE"/>
    <property type="match status" value="1"/>
</dbReference>
<dbReference type="HAMAP" id="MF_01151">
    <property type="entry name" value="GrpE"/>
    <property type="match status" value="1"/>
</dbReference>
<dbReference type="InterPro" id="IPR000740">
    <property type="entry name" value="GrpE"/>
</dbReference>
<dbReference type="InterPro" id="IPR013805">
    <property type="entry name" value="GrpE_coiled_coil"/>
</dbReference>
<dbReference type="InterPro" id="IPR009012">
    <property type="entry name" value="GrpE_head"/>
</dbReference>
<dbReference type="NCBIfam" id="NF010739">
    <property type="entry name" value="PRK14141.1"/>
    <property type="match status" value="1"/>
</dbReference>
<dbReference type="PANTHER" id="PTHR21237">
    <property type="entry name" value="GRPE PROTEIN"/>
    <property type="match status" value="1"/>
</dbReference>
<dbReference type="PANTHER" id="PTHR21237:SF23">
    <property type="entry name" value="GRPE PROTEIN HOMOLOG, MITOCHONDRIAL"/>
    <property type="match status" value="1"/>
</dbReference>
<dbReference type="Pfam" id="PF01025">
    <property type="entry name" value="GrpE"/>
    <property type="match status" value="1"/>
</dbReference>
<dbReference type="PRINTS" id="PR00773">
    <property type="entry name" value="GRPEPROTEIN"/>
</dbReference>
<dbReference type="SUPFAM" id="SSF58014">
    <property type="entry name" value="Coiled-coil domain of nucleotide exchange factor GrpE"/>
    <property type="match status" value="1"/>
</dbReference>
<dbReference type="SUPFAM" id="SSF51064">
    <property type="entry name" value="Head domain of nucleotide exchange factor GrpE"/>
    <property type="match status" value="1"/>
</dbReference>
<dbReference type="PROSITE" id="PS01071">
    <property type="entry name" value="GRPE"/>
    <property type="match status" value="1"/>
</dbReference>
<evidence type="ECO:0000255" key="1">
    <source>
        <dbReference type="HAMAP-Rule" id="MF_01151"/>
    </source>
</evidence>
<evidence type="ECO:0000256" key="2">
    <source>
        <dbReference type="SAM" id="MobiDB-lite"/>
    </source>
</evidence>
<gene>
    <name evidence="1" type="primary">grpE</name>
    <name type="ordered locus">BRADO0171</name>
</gene>
<feature type="chain" id="PRO_1000053548" description="Protein GrpE">
    <location>
        <begin position="1"/>
        <end position="206"/>
    </location>
</feature>
<feature type="region of interest" description="Disordered" evidence="2">
    <location>
        <begin position="1"/>
        <end position="38"/>
    </location>
</feature>
<feature type="compositionally biased region" description="Basic and acidic residues" evidence="2">
    <location>
        <begin position="1"/>
        <end position="10"/>
    </location>
</feature>
<accession>A4YJR1</accession>